<feature type="chain" id="PRO_0000200184" description="Homeobox protein Hox-C9">
    <location>
        <begin position="1"/>
        <end position="260"/>
    </location>
</feature>
<feature type="DNA-binding region" description="Homeobox" evidence="1">
    <location>
        <begin position="192"/>
        <end position="251"/>
    </location>
</feature>
<feature type="region of interest" description="Disordered" evidence="2">
    <location>
        <begin position="120"/>
        <end position="181"/>
    </location>
</feature>
<feature type="modified residue" description="Phosphoserine" evidence="6">
    <location>
        <position position="159"/>
    </location>
</feature>
<feature type="sequence variant" id="VAR_036267" description="In a colorectal cancer sample; somatic mutation." evidence="3">
    <original>G</original>
    <variation>S</variation>
    <location>
        <position position="87"/>
    </location>
</feature>
<feature type="sequence conflict" description="In Ref. 2; AK000445." evidence="5" ref="2">
    <original>C</original>
    <variation>R</variation>
    <location>
        <position position="47"/>
    </location>
</feature>
<feature type="strand" evidence="8">
    <location>
        <begin position="186"/>
        <end position="188"/>
    </location>
</feature>
<feature type="strand" evidence="7">
    <location>
        <begin position="194"/>
        <end position="196"/>
    </location>
</feature>
<feature type="helix" evidence="7">
    <location>
        <begin position="201"/>
        <end position="213"/>
    </location>
</feature>
<feature type="helix" evidence="7">
    <location>
        <begin position="219"/>
        <end position="228"/>
    </location>
</feature>
<feature type="helix" evidence="7">
    <location>
        <begin position="233"/>
        <end position="248"/>
    </location>
</feature>
<evidence type="ECO:0000255" key="1">
    <source>
        <dbReference type="PROSITE-ProRule" id="PRU00108"/>
    </source>
</evidence>
<evidence type="ECO:0000256" key="2">
    <source>
        <dbReference type="SAM" id="MobiDB-lite"/>
    </source>
</evidence>
<evidence type="ECO:0000269" key="3">
    <source>
    </source>
</evidence>
<evidence type="ECO:0000269" key="4">
    <source>
    </source>
</evidence>
<evidence type="ECO:0000305" key="5"/>
<evidence type="ECO:0007744" key="6">
    <source>
    </source>
</evidence>
<evidence type="ECO:0007829" key="7">
    <source>
        <dbReference type="PDB" id="2LP0"/>
    </source>
</evidence>
<evidence type="ECO:0007829" key="8">
    <source>
        <dbReference type="PDB" id="2MSY"/>
    </source>
</evidence>
<gene>
    <name type="primary">HOXC9</name>
    <name type="synonym">HOX3B</name>
</gene>
<sequence>MSATGPISNYYVDSLISHDNEDLLASRFPATGAHPAAARPSGLVPDCSDFPSCSFAPKPAVFSTSWAPVPSQSSVVYHPYGPQPHLGADTRYMRTWLEPLSGAVSFPSFPAGGRHYALKPDAYPGRRADCGPGEGRSYPDYMYGSPGELRDRAPQTLPSPEADALAGSKHKEEKADLDPSNPVANWIHARSTRKKRCPYTKYQTLELEKEFLFNMYLTRDRRYEVARVLNLTERQVKIWFQNRRMKMKKMNKEKTDKEQS</sequence>
<accession>P31274</accession>
<accession>B2RCN7</accession>
<accession>Q9H1I0</accession>
<name>HXC9_HUMAN</name>
<comment type="function">
    <text>Sequence-specific transcription factor which is part of a developmental regulatory system that provides cells with specific positional identities on the anterior-posterior axis.</text>
</comment>
<comment type="subunit">
    <text evidence="4">Interacts with Geminin/GMNN, which inhibits transcriptional activity.</text>
</comment>
<comment type="interaction">
    <interactant intactId="EBI-1779423">
        <id>P31274</id>
    </interactant>
    <interactant intactId="EBI-3867333">
        <id>A8MQ03</id>
        <label>CYSRT1</label>
    </interactant>
    <organismsDiffer>false</organismsDiffer>
    <experiments>3</experiments>
</comment>
<comment type="interaction">
    <interactant intactId="EBI-1779423">
        <id>P31274</id>
    </interactant>
    <interactant intactId="EBI-371669">
        <id>O75496</id>
        <label>GMNN</label>
    </interactant>
    <organismsDiffer>false</organismsDiffer>
    <experiments>3</experiments>
</comment>
<comment type="interaction">
    <interactant intactId="EBI-1779423">
        <id>P31274</id>
    </interactant>
    <interactant intactId="EBI-11962084">
        <id>Q3LI66</id>
        <label>KRTAP6-2</label>
    </interactant>
    <organismsDiffer>false</organismsDiffer>
    <experiments>3</experiments>
</comment>
<comment type="interaction">
    <interactant intactId="EBI-1779423">
        <id>P31274</id>
    </interactant>
    <interactant intactId="EBI-744222">
        <id>O60711</id>
        <label>LPXN</label>
    </interactant>
    <organismsDiffer>false</organismsDiffer>
    <experiments>7</experiments>
</comment>
<comment type="interaction">
    <interactant intactId="EBI-1779423">
        <id>P31274</id>
    </interactant>
    <interactant intactId="EBI-716006">
        <id>Q9Y5V3</id>
        <label>MAGED1</label>
    </interactant>
    <organismsDiffer>false</organismsDiffer>
    <experiments>3</experiments>
</comment>
<comment type="interaction">
    <interactant intactId="EBI-1779423">
        <id>P31274</id>
    </interactant>
    <interactant intactId="EBI-6447480">
        <id>P35548</id>
        <label>MSX2</label>
    </interactant>
    <organismsDiffer>false</organismsDiffer>
    <experiments>3</experiments>
</comment>
<comment type="interaction">
    <interactant intactId="EBI-1779423">
        <id>P31274</id>
    </interactant>
    <interactant intactId="EBI-10271199">
        <id>Q8NI38</id>
        <label>NFKBID</label>
    </interactant>
    <organismsDiffer>false</organismsDiffer>
    <experiments>3</experiments>
</comment>
<comment type="interaction">
    <interactant intactId="EBI-1779423">
        <id>P31274</id>
    </interactant>
    <interactant intactId="EBI-747278">
        <id>P26367</id>
        <label>PAX6</label>
    </interactant>
    <organismsDiffer>false</organismsDiffer>
    <experiments>3</experiments>
</comment>
<comment type="interaction">
    <interactant intactId="EBI-1779423">
        <id>P31274</id>
    </interactant>
    <interactant intactId="EBI-2683132">
        <id>Q06710</id>
        <label>PAX8</label>
    </interactant>
    <organismsDiffer>false</organismsDiffer>
    <experiments>3</experiments>
</comment>
<comment type="interaction">
    <interactant intactId="EBI-1779423">
        <id>P31274</id>
    </interactant>
    <interactant intactId="EBI-348489">
        <id>P40425</id>
        <label>PBX2</label>
    </interactant>
    <organismsDiffer>false</organismsDiffer>
    <experiments>3</experiments>
</comment>
<comment type="interaction">
    <interactant intactId="EBI-1779423">
        <id>P31274</id>
    </interactant>
    <interactant intactId="EBI-943588">
        <id>Q16633</id>
        <label>POU2AF1</label>
    </interactant>
    <organismsDiffer>false</organismsDiffer>
    <experiments>3</experiments>
</comment>
<comment type="interaction">
    <interactant intactId="EBI-1779423">
        <id>P31274</id>
    </interactant>
    <interactant intactId="EBI-743976">
        <id>Q96LM6</id>
        <label>SPMIP9</label>
    </interactant>
    <organismsDiffer>false</organismsDiffer>
    <experiments>3</experiments>
</comment>
<comment type="interaction">
    <interactant intactId="EBI-1779423">
        <id>P31274</id>
    </interactant>
    <interactant intactId="EBI-11741437">
        <id>Q08117-2</id>
        <label>TLE5</label>
    </interactant>
    <organismsDiffer>false</organismsDiffer>
    <experiments>3</experiments>
</comment>
<comment type="interaction">
    <interactant intactId="EBI-1779423">
        <id>P31274</id>
    </interactant>
    <interactant intactId="EBI-12068150">
        <id>Q6NVU6</id>
        <label>UFSP1</label>
    </interactant>
    <organismsDiffer>false</organismsDiffer>
    <experiments>3</experiments>
</comment>
<comment type="interaction">
    <interactant intactId="EBI-1779423">
        <id>P31274</id>
    </interactant>
    <interactant intactId="EBI-12030590">
        <id>Q9H0C1</id>
        <label>ZMYND12</label>
    </interactant>
    <organismsDiffer>false</organismsDiffer>
    <experiments>3</experiments>
</comment>
<comment type="interaction">
    <interactant intactId="EBI-1779423">
        <id>P31274</id>
    </interactant>
    <interactant intactId="EBI-1779322">
        <id>P03120</id>
        <label>E2</label>
    </interactant>
    <organismsDiffer>true</organismsDiffer>
    <experiments>3</experiments>
</comment>
<comment type="subcellular location">
    <subcellularLocation>
        <location>Nucleus</location>
    </subcellularLocation>
</comment>
<comment type="similarity">
    <text evidence="5">Belongs to the Abd-B homeobox family.</text>
</comment>
<keyword id="KW-0002">3D-structure</keyword>
<keyword id="KW-0217">Developmental protein</keyword>
<keyword id="KW-0238">DNA-binding</keyword>
<keyword id="KW-0371">Homeobox</keyword>
<keyword id="KW-0539">Nucleus</keyword>
<keyword id="KW-0597">Phosphoprotein</keyword>
<keyword id="KW-1267">Proteomics identification</keyword>
<keyword id="KW-1185">Reference proteome</keyword>
<keyword id="KW-0804">Transcription</keyword>
<keyword id="KW-0805">Transcription regulation</keyword>
<protein>
    <recommendedName>
        <fullName>Homeobox protein Hox-C9</fullName>
    </recommendedName>
    <alternativeName>
        <fullName>Homeobox protein Hox-3B</fullName>
    </alternativeName>
</protein>
<dbReference type="EMBL" id="AY014302">
    <property type="protein sequence ID" value="AAG42151.1"/>
    <property type="molecule type" value="Genomic_DNA"/>
</dbReference>
<dbReference type="EMBL" id="AY014301">
    <property type="protein sequence ID" value="AAG42151.1"/>
    <property type="status" value="JOINED"/>
    <property type="molecule type" value="Genomic_DNA"/>
</dbReference>
<dbReference type="EMBL" id="AK000445">
    <property type="status" value="NOT_ANNOTATED_CDS"/>
    <property type="molecule type" value="mRNA"/>
</dbReference>
<dbReference type="EMBL" id="AK315194">
    <property type="protein sequence ID" value="BAG37634.1"/>
    <property type="molecule type" value="mRNA"/>
</dbReference>
<dbReference type="EMBL" id="CH471054">
    <property type="protein sequence ID" value="EAW96741.1"/>
    <property type="molecule type" value="Genomic_DNA"/>
</dbReference>
<dbReference type="EMBL" id="BC053894">
    <property type="protein sequence ID" value="AAH53894.1"/>
    <property type="molecule type" value="mRNA"/>
</dbReference>
<dbReference type="CCDS" id="CCDS8869.1"/>
<dbReference type="PIR" id="S15532">
    <property type="entry name" value="S15532"/>
</dbReference>
<dbReference type="RefSeq" id="NP_008828.1">
    <property type="nucleotide sequence ID" value="NM_006897.3"/>
</dbReference>
<dbReference type="PDB" id="2LP0">
    <property type="method" value="NMR"/>
    <property type="chains" value="A=192-251"/>
</dbReference>
<dbReference type="PDB" id="2MSY">
    <property type="method" value="NMR"/>
    <property type="chains" value="A=184-251"/>
</dbReference>
<dbReference type="PDBsum" id="2LP0"/>
<dbReference type="PDBsum" id="2MSY"/>
<dbReference type="BMRB" id="P31274"/>
<dbReference type="SMR" id="P31274"/>
<dbReference type="BioGRID" id="109465">
    <property type="interactions" value="51"/>
</dbReference>
<dbReference type="ComplexPortal" id="CPX-660">
    <property type="entry name" value="HOXC9-Geminin transcriptional repressor complex"/>
</dbReference>
<dbReference type="FunCoup" id="P31274">
    <property type="interactions" value="522"/>
</dbReference>
<dbReference type="IntAct" id="P31274">
    <property type="interactions" value="58"/>
</dbReference>
<dbReference type="MINT" id="P31274"/>
<dbReference type="STRING" id="9606.ENSP00000423861"/>
<dbReference type="GlyGen" id="P31274">
    <property type="glycosylation" value="3 sites, 1 O-linked glycan (3 sites)"/>
</dbReference>
<dbReference type="iPTMnet" id="P31274"/>
<dbReference type="PhosphoSitePlus" id="P31274"/>
<dbReference type="BioMuta" id="HOXC9"/>
<dbReference type="DMDM" id="20141537"/>
<dbReference type="jPOST" id="P31274"/>
<dbReference type="MassIVE" id="P31274"/>
<dbReference type="PaxDb" id="9606-ENSP00000302836"/>
<dbReference type="PeptideAtlas" id="P31274"/>
<dbReference type="ProteomicsDB" id="54774"/>
<dbReference type="Pumba" id="P31274"/>
<dbReference type="Antibodypedia" id="15314">
    <property type="antibodies" value="223 antibodies from 26 providers"/>
</dbReference>
<dbReference type="DNASU" id="3225"/>
<dbReference type="Ensembl" id="ENST00000303450.5">
    <property type="protein sequence ID" value="ENSP00000302836.4"/>
    <property type="gene ID" value="ENSG00000180806.5"/>
</dbReference>
<dbReference type="Ensembl" id="ENST00000508190.1">
    <property type="protein sequence ID" value="ENSP00000423861.1"/>
    <property type="gene ID" value="ENSG00000180806.5"/>
</dbReference>
<dbReference type="GeneID" id="3225"/>
<dbReference type="KEGG" id="hsa:3225"/>
<dbReference type="MANE-Select" id="ENST00000303450.5">
    <property type="protein sequence ID" value="ENSP00000302836.4"/>
    <property type="RefSeq nucleotide sequence ID" value="NM_006897.3"/>
    <property type="RefSeq protein sequence ID" value="NP_008828.1"/>
</dbReference>
<dbReference type="UCSC" id="uc001seq.4">
    <property type="organism name" value="human"/>
</dbReference>
<dbReference type="AGR" id="HGNC:5130"/>
<dbReference type="CTD" id="3225"/>
<dbReference type="DisGeNET" id="3225"/>
<dbReference type="GeneCards" id="HOXC9"/>
<dbReference type="HGNC" id="HGNC:5130">
    <property type="gene designation" value="HOXC9"/>
</dbReference>
<dbReference type="HPA" id="ENSG00000180806">
    <property type="expression patterns" value="Tissue enhanced (adipose tissue, skeletal muscle)"/>
</dbReference>
<dbReference type="MIM" id="142971">
    <property type="type" value="gene"/>
</dbReference>
<dbReference type="neXtProt" id="NX_P31274"/>
<dbReference type="OpenTargets" id="ENSG00000180806"/>
<dbReference type="PharmGKB" id="PA29405"/>
<dbReference type="VEuPathDB" id="HostDB:ENSG00000180806"/>
<dbReference type="eggNOG" id="KOG0487">
    <property type="taxonomic scope" value="Eukaryota"/>
</dbReference>
<dbReference type="GeneTree" id="ENSGT00940000160866"/>
<dbReference type="HOGENOM" id="CLU_071854_2_0_1"/>
<dbReference type="InParanoid" id="P31274"/>
<dbReference type="OMA" id="GYADYMY"/>
<dbReference type="OrthoDB" id="6159439at2759"/>
<dbReference type="PAN-GO" id="P31274">
    <property type="GO annotations" value="7 GO annotations based on evolutionary models"/>
</dbReference>
<dbReference type="PhylomeDB" id="P31274"/>
<dbReference type="TreeFam" id="TF317819"/>
<dbReference type="PathwayCommons" id="P31274"/>
<dbReference type="SignaLink" id="P31274"/>
<dbReference type="BioGRID-ORCS" id="3225">
    <property type="hits" value="35 hits in 1178 CRISPR screens"/>
</dbReference>
<dbReference type="ChiTaRS" id="HOXC9">
    <property type="organism name" value="human"/>
</dbReference>
<dbReference type="EvolutionaryTrace" id="P31274"/>
<dbReference type="GeneWiki" id="HOXC9"/>
<dbReference type="GenomeRNAi" id="3225"/>
<dbReference type="Pharos" id="P31274">
    <property type="development level" value="Tbio"/>
</dbReference>
<dbReference type="PRO" id="PR:P31274"/>
<dbReference type="Proteomes" id="UP000005640">
    <property type="component" value="Chromosome 12"/>
</dbReference>
<dbReference type="RNAct" id="P31274">
    <property type="molecule type" value="protein"/>
</dbReference>
<dbReference type="Bgee" id="ENSG00000180806">
    <property type="expression patterns" value="Expressed in calcaneal tendon and 100 other cell types or tissues"/>
</dbReference>
<dbReference type="ExpressionAtlas" id="P31274">
    <property type="expression patterns" value="baseline and differential"/>
</dbReference>
<dbReference type="GO" id="GO:0016235">
    <property type="term" value="C:aggresome"/>
    <property type="evidence" value="ECO:0000314"/>
    <property type="project" value="HPA"/>
</dbReference>
<dbReference type="GO" id="GO:0000785">
    <property type="term" value="C:chromatin"/>
    <property type="evidence" value="ECO:0000247"/>
    <property type="project" value="NTNU_SB"/>
</dbReference>
<dbReference type="GO" id="GO:0005654">
    <property type="term" value="C:nucleoplasm"/>
    <property type="evidence" value="ECO:0000314"/>
    <property type="project" value="HPA"/>
</dbReference>
<dbReference type="GO" id="GO:0005634">
    <property type="term" value="C:nucleus"/>
    <property type="evidence" value="ECO:0000318"/>
    <property type="project" value="GO_Central"/>
</dbReference>
<dbReference type="GO" id="GO:0017053">
    <property type="term" value="C:transcription repressor complex"/>
    <property type="evidence" value="ECO:0000353"/>
    <property type="project" value="ComplexPortal"/>
</dbReference>
<dbReference type="GO" id="GO:0003700">
    <property type="term" value="F:DNA-binding transcription factor activity"/>
    <property type="evidence" value="ECO:0000318"/>
    <property type="project" value="GO_Central"/>
</dbReference>
<dbReference type="GO" id="GO:0000981">
    <property type="term" value="F:DNA-binding transcription factor activity, RNA polymerase II-specific"/>
    <property type="evidence" value="ECO:0000247"/>
    <property type="project" value="NTNU_SB"/>
</dbReference>
<dbReference type="GO" id="GO:0000978">
    <property type="term" value="F:RNA polymerase II cis-regulatory region sequence-specific DNA binding"/>
    <property type="evidence" value="ECO:0000318"/>
    <property type="project" value="GO_Central"/>
</dbReference>
<dbReference type="GO" id="GO:1990837">
    <property type="term" value="F:sequence-specific double-stranded DNA binding"/>
    <property type="evidence" value="ECO:0000314"/>
    <property type="project" value="ARUK-UCL"/>
</dbReference>
<dbReference type="GO" id="GO:0009952">
    <property type="term" value="P:anterior/posterior pattern specification"/>
    <property type="evidence" value="ECO:0000318"/>
    <property type="project" value="GO_Central"/>
</dbReference>
<dbReference type="GO" id="GO:0006351">
    <property type="term" value="P:DNA-templated transcription"/>
    <property type="evidence" value="ECO:0007669"/>
    <property type="project" value="InterPro"/>
</dbReference>
<dbReference type="GO" id="GO:0048704">
    <property type="term" value="P:embryonic skeletal system morphogenesis"/>
    <property type="evidence" value="ECO:0000318"/>
    <property type="project" value="GO_Central"/>
</dbReference>
<dbReference type="GO" id="GO:0045786">
    <property type="term" value="P:negative regulation of cell cycle"/>
    <property type="evidence" value="ECO:0000303"/>
    <property type="project" value="ComplexPortal"/>
</dbReference>
<dbReference type="GO" id="GO:0009954">
    <property type="term" value="P:proximal/distal pattern formation"/>
    <property type="evidence" value="ECO:0000318"/>
    <property type="project" value="GO_Central"/>
</dbReference>
<dbReference type="GO" id="GO:0006357">
    <property type="term" value="P:regulation of transcription by RNA polymerase II"/>
    <property type="evidence" value="ECO:0000318"/>
    <property type="project" value="GO_Central"/>
</dbReference>
<dbReference type="CDD" id="cd00086">
    <property type="entry name" value="homeodomain"/>
    <property type="match status" value="1"/>
</dbReference>
<dbReference type="FunFam" id="1.10.10.60:FF:000018">
    <property type="entry name" value="Homeobox A10"/>
    <property type="match status" value="1"/>
</dbReference>
<dbReference type="Gene3D" id="1.10.10.60">
    <property type="entry name" value="Homeodomain-like"/>
    <property type="match status" value="1"/>
</dbReference>
<dbReference type="IDEAL" id="IID00448"/>
<dbReference type="InterPro" id="IPR050803">
    <property type="entry name" value="Abd-B_homeobox_TF"/>
</dbReference>
<dbReference type="InterPro" id="IPR001356">
    <property type="entry name" value="HD"/>
</dbReference>
<dbReference type="InterPro" id="IPR020479">
    <property type="entry name" value="HD_metazoa"/>
</dbReference>
<dbReference type="InterPro" id="IPR017970">
    <property type="entry name" value="Homeobox_CS"/>
</dbReference>
<dbReference type="InterPro" id="IPR009057">
    <property type="entry name" value="Homeodomain-like_sf"/>
</dbReference>
<dbReference type="InterPro" id="IPR006711">
    <property type="entry name" value="Hox9_activation_N"/>
</dbReference>
<dbReference type="InterPro" id="IPR017112">
    <property type="entry name" value="HXA9/HXB9/HXC9"/>
</dbReference>
<dbReference type="PANTHER" id="PTHR45970">
    <property type="entry name" value="AGAP004664-PA"/>
    <property type="match status" value="1"/>
</dbReference>
<dbReference type="PANTHER" id="PTHR45970:SF1">
    <property type="entry name" value="HOMEOBOX PROTEIN HOX-C9"/>
    <property type="match status" value="1"/>
</dbReference>
<dbReference type="Pfam" id="PF00046">
    <property type="entry name" value="Homeodomain"/>
    <property type="match status" value="1"/>
</dbReference>
<dbReference type="Pfam" id="PF04617">
    <property type="entry name" value="Hox9_act"/>
    <property type="match status" value="1"/>
</dbReference>
<dbReference type="PIRSF" id="PIRSF037109">
    <property type="entry name" value="Homeobox_Hox9"/>
    <property type="match status" value="1"/>
</dbReference>
<dbReference type="PRINTS" id="PR00024">
    <property type="entry name" value="HOMEOBOX"/>
</dbReference>
<dbReference type="SMART" id="SM00389">
    <property type="entry name" value="HOX"/>
    <property type="match status" value="1"/>
</dbReference>
<dbReference type="SUPFAM" id="SSF46689">
    <property type="entry name" value="Homeodomain-like"/>
    <property type="match status" value="1"/>
</dbReference>
<dbReference type="PROSITE" id="PS00027">
    <property type="entry name" value="HOMEOBOX_1"/>
    <property type="match status" value="1"/>
</dbReference>
<dbReference type="PROSITE" id="PS50071">
    <property type="entry name" value="HOMEOBOX_2"/>
    <property type="match status" value="1"/>
</dbReference>
<organism>
    <name type="scientific">Homo sapiens</name>
    <name type="common">Human</name>
    <dbReference type="NCBI Taxonomy" id="9606"/>
    <lineage>
        <taxon>Eukaryota</taxon>
        <taxon>Metazoa</taxon>
        <taxon>Chordata</taxon>
        <taxon>Craniata</taxon>
        <taxon>Vertebrata</taxon>
        <taxon>Euteleostomi</taxon>
        <taxon>Mammalia</taxon>
        <taxon>Eutheria</taxon>
        <taxon>Euarchontoglires</taxon>
        <taxon>Primates</taxon>
        <taxon>Haplorrhini</taxon>
        <taxon>Catarrhini</taxon>
        <taxon>Hominidae</taxon>
        <taxon>Homo</taxon>
    </lineage>
</organism>
<proteinExistence type="evidence at protein level"/>
<reference key="1">
    <citation type="journal article" date="2002" name="Teratology">
        <title>Complete mutation analysis panel of the 39 human HOX genes.</title>
        <authorList>
            <person name="Kosaki K."/>
            <person name="Kosaki R."/>
            <person name="Suzuki T."/>
            <person name="Yoshihashi H."/>
            <person name="Takahashi T."/>
            <person name="Sasaki K."/>
            <person name="Tomita M."/>
            <person name="McGinnis W."/>
            <person name="Matsuo N."/>
        </authorList>
    </citation>
    <scope>NUCLEOTIDE SEQUENCE [GENOMIC DNA]</scope>
</reference>
<reference key="2">
    <citation type="journal article" date="2004" name="Nat. Genet.">
        <title>Complete sequencing and characterization of 21,243 full-length human cDNAs.</title>
        <authorList>
            <person name="Ota T."/>
            <person name="Suzuki Y."/>
            <person name="Nishikawa T."/>
            <person name="Otsuki T."/>
            <person name="Sugiyama T."/>
            <person name="Irie R."/>
            <person name="Wakamatsu A."/>
            <person name="Hayashi K."/>
            <person name="Sato H."/>
            <person name="Nagai K."/>
            <person name="Kimura K."/>
            <person name="Makita H."/>
            <person name="Sekine M."/>
            <person name="Obayashi M."/>
            <person name="Nishi T."/>
            <person name="Shibahara T."/>
            <person name="Tanaka T."/>
            <person name="Ishii S."/>
            <person name="Yamamoto J."/>
            <person name="Saito K."/>
            <person name="Kawai Y."/>
            <person name="Isono Y."/>
            <person name="Nakamura Y."/>
            <person name="Nagahari K."/>
            <person name="Murakami K."/>
            <person name="Yasuda T."/>
            <person name="Iwayanagi T."/>
            <person name="Wagatsuma M."/>
            <person name="Shiratori A."/>
            <person name="Sudo H."/>
            <person name="Hosoiri T."/>
            <person name="Kaku Y."/>
            <person name="Kodaira H."/>
            <person name="Kondo H."/>
            <person name="Sugawara M."/>
            <person name="Takahashi M."/>
            <person name="Kanda K."/>
            <person name="Yokoi T."/>
            <person name="Furuya T."/>
            <person name="Kikkawa E."/>
            <person name="Omura Y."/>
            <person name="Abe K."/>
            <person name="Kamihara K."/>
            <person name="Katsuta N."/>
            <person name="Sato K."/>
            <person name="Tanikawa M."/>
            <person name="Yamazaki M."/>
            <person name="Ninomiya K."/>
            <person name="Ishibashi T."/>
            <person name="Yamashita H."/>
            <person name="Murakawa K."/>
            <person name="Fujimori K."/>
            <person name="Tanai H."/>
            <person name="Kimata M."/>
            <person name="Watanabe M."/>
            <person name="Hiraoka S."/>
            <person name="Chiba Y."/>
            <person name="Ishida S."/>
            <person name="Ono Y."/>
            <person name="Takiguchi S."/>
            <person name="Watanabe S."/>
            <person name="Yosida M."/>
            <person name="Hotuta T."/>
            <person name="Kusano J."/>
            <person name="Kanehori K."/>
            <person name="Takahashi-Fujii A."/>
            <person name="Hara H."/>
            <person name="Tanase T.-O."/>
            <person name="Nomura Y."/>
            <person name="Togiya S."/>
            <person name="Komai F."/>
            <person name="Hara R."/>
            <person name="Takeuchi K."/>
            <person name="Arita M."/>
            <person name="Imose N."/>
            <person name="Musashino K."/>
            <person name="Yuuki H."/>
            <person name="Oshima A."/>
            <person name="Sasaki N."/>
            <person name="Aotsuka S."/>
            <person name="Yoshikawa Y."/>
            <person name="Matsunawa H."/>
            <person name="Ichihara T."/>
            <person name="Shiohata N."/>
            <person name="Sano S."/>
            <person name="Moriya S."/>
            <person name="Momiyama H."/>
            <person name="Satoh N."/>
            <person name="Takami S."/>
            <person name="Terashima Y."/>
            <person name="Suzuki O."/>
            <person name="Nakagawa S."/>
            <person name="Senoh A."/>
            <person name="Mizoguchi H."/>
            <person name="Goto Y."/>
            <person name="Shimizu F."/>
            <person name="Wakebe H."/>
            <person name="Hishigaki H."/>
            <person name="Watanabe T."/>
            <person name="Sugiyama A."/>
            <person name="Takemoto M."/>
            <person name="Kawakami B."/>
            <person name="Yamazaki M."/>
            <person name="Watanabe K."/>
            <person name="Kumagai A."/>
            <person name="Itakura S."/>
            <person name="Fukuzumi Y."/>
            <person name="Fujimori Y."/>
            <person name="Komiyama M."/>
            <person name="Tashiro H."/>
            <person name="Tanigami A."/>
            <person name="Fujiwara T."/>
            <person name="Ono T."/>
            <person name="Yamada K."/>
            <person name="Fujii Y."/>
            <person name="Ozaki K."/>
            <person name="Hirao M."/>
            <person name="Ohmori Y."/>
            <person name="Kawabata A."/>
            <person name="Hikiji T."/>
            <person name="Kobatake N."/>
            <person name="Inagaki H."/>
            <person name="Ikema Y."/>
            <person name="Okamoto S."/>
            <person name="Okitani R."/>
            <person name="Kawakami T."/>
            <person name="Noguchi S."/>
            <person name="Itoh T."/>
            <person name="Shigeta K."/>
            <person name="Senba T."/>
            <person name="Matsumura K."/>
            <person name="Nakajima Y."/>
            <person name="Mizuno T."/>
            <person name="Morinaga M."/>
            <person name="Sasaki M."/>
            <person name="Togashi T."/>
            <person name="Oyama M."/>
            <person name="Hata H."/>
            <person name="Watanabe M."/>
            <person name="Komatsu T."/>
            <person name="Mizushima-Sugano J."/>
            <person name="Satoh T."/>
            <person name="Shirai Y."/>
            <person name="Takahashi Y."/>
            <person name="Nakagawa K."/>
            <person name="Okumura K."/>
            <person name="Nagase T."/>
            <person name="Nomura N."/>
            <person name="Kikuchi H."/>
            <person name="Masuho Y."/>
            <person name="Yamashita R."/>
            <person name="Nakai K."/>
            <person name="Yada T."/>
            <person name="Nakamura Y."/>
            <person name="Ohara O."/>
            <person name="Isogai T."/>
            <person name="Sugano S."/>
        </authorList>
    </citation>
    <scope>NUCLEOTIDE SEQUENCE [LARGE SCALE MRNA]</scope>
    <source>
        <tissue>Synovium</tissue>
    </source>
</reference>
<reference key="3">
    <citation type="submission" date="2005-07" db="EMBL/GenBank/DDBJ databases">
        <authorList>
            <person name="Mural R.J."/>
            <person name="Istrail S."/>
            <person name="Sutton G.G."/>
            <person name="Florea L."/>
            <person name="Halpern A.L."/>
            <person name="Mobarry C.M."/>
            <person name="Lippert R."/>
            <person name="Walenz B."/>
            <person name="Shatkay H."/>
            <person name="Dew I."/>
            <person name="Miller J.R."/>
            <person name="Flanigan M.J."/>
            <person name="Edwards N.J."/>
            <person name="Bolanos R."/>
            <person name="Fasulo D."/>
            <person name="Halldorsson B.V."/>
            <person name="Hannenhalli S."/>
            <person name="Turner R."/>
            <person name="Yooseph S."/>
            <person name="Lu F."/>
            <person name="Nusskern D.R."/>
            <person name="Shue B.C."/>
            <person name="Zheng X.H."/>
            <person name="Zhong F."/>
            <person name="Delcher A.L."/>
            <person name="Huson D.H."/>
            <person name="Kravitz S.A."/>
            <person name="Mouchard L."/>
            <person name="Reinert K."/>
            <person name="Remington K.A."/>
            <person name="Clark A.G."/>
            <person name="Waterman M.S."/>
            <person name="Eichler E.E."/>
            <person name="Adams M.D."/>
            <person name="Hunkapiller M.W."/>
            <person name="Myers E.W."/>
            <person name="Venter J.C."/>
        </authorList>
    </citation>
    <scope>NUCLEOTIDE SEQUENCE [LARGE SCALE GENOMIC DNA]</scope>
</reference>
<reference key="4">
    <citation type="journal article" date="2004" name="Genome Res.">
        <title>The status, quality, and expansion of the NIH full-length cDNA project: the Mammalian Gene Collection (MGC).</title>
        <authorList>
            <consortium name="The MGC Project Team"/>
        </authorList>
    </citation>
    <scope>NUCLEOTIDE SEQUENCE [LARGE SCALE MRNA]</scope>
    <source>
        <tissue>Eye</tissue>
    </source>
</reference>
<reference key="5">
    <citation type="journal article" date="1989" name="Genome">
        <title>Organization of human class I homeobox genes.</title>
        <authorList>
            <person name="Boncinelli E."/>
            <person name="Acampora D."/>
            <person name="Pannese M."/>
            <person name="D'Esposito M."/>
            <person name="Somma R."/>
            <person name="Gaudino G."/>
            <person name="Stornaiuolo A."/>
            <person name="Cafiero M."/>
            <person name="Faiella A."/>
            <person name="Simeone A."/>
        </authorList>
    </citation>
    <scope>NUCLEOTIDE SEQUENCE [GENOMIC DNA] OF 192-257</scope>
</reference>
<reference key="6">
    <citation type="journal article" date="2013" name="J. Proteome Res.">
        <title>Toward a comprehensive characterization of a human cancer cell phosphoproteome.</title>
        <authorList>
            <person name="Zhou H."/>
            <person name="Di Palma S."/>
            <person name="Preisinger C."/>
            <person name="Peng M."/>
            <person name="Polat A.N."/>
            <person name="Heck A.J."/>
            <person name="Mohammed S."/>
        </authorList>
    </citation>
    <scope>PHOSPHORYLATION [LARGE SCALE ANALYSIS] AT SER-159</scope>
    <scope>IDENTIFICATION BY MASS SPECTROMETRY [LARGE SCALE ANALYSIS]</scope>
    <source>
        <tissue>Cervix carcinoma</tissue>
        <tissue>Erythroleukemia</tissue>
    </source>
</reference>
<reference key="7">
    <citation type="journal article" date="2012" name="Proc. Natl. Acad. Sci. U.S.A.">
        <title>Structural basis for homeodomain recognition by the cell-cycle regulator Geminin.</title>
        <authorList>
            <person name="Zhou B."/>
            <person name="Liu C."/>
            <person name="Xu Z."/>
            <person name="Zhu G."/>
        </authorList>
    </citation>
    <scope>STRUCTURE BY NMR OF 192-251 IN COMPLEX WITH GMNN</scope>
    <scope>INTERACTION WITH GMNN</scope>
</reference>
<reference key="8">
    <citation type="journal article" date="2006" name="Science">
        <title>The consensus coding sequences of human breast and colorectal cancers.</title>
        <authorList>
            <person name="Sjoeblom T."/>
            <person name="Jones S."/>
            <person name="Wood L.D."/>
            <person name="Parsons D.W."/>
            <person name="Lin J."/>
            <person name="Barber T.D."/>
            <person name="Mandelker D."/>
            <person name="Leary R.J."/>
            <person name="Ptak J."/>
            <person name="Silliman N."/>
            <person name="Szabo S."/>
            <person name="Buckhaults P."/>
            <person name="Farrell C."/>
            <person name="Meeh P."/>
            <person name="Markowitz S.D."/>
            <person name="Willis J."/>
            <person name="Dawson D."/>
            <person name="Willson J.K.V."/>
            <person name="Gazdar A.F."/>
            <person name="Hartigan J."/>
            <person name="Wu L."/>
            <person name="Liu C."/>
            <person name="Parmigiani G."/>
            <person name="Park B.H."/>
            <person name="Bachman K.E."/>
            <person name="Papadopoulos N."/>
            <person name="Vogelstein B."/>
            <person name="Kinzler K.W."/>
            <person name="Velculescu V.E."/>
        </authorList>
    </citation>
    <scope>VARIANT [LARGE SCALE ANALYSIS] SER-87</scope>
</reference>